<protein>
    <recommendedName>
        <fullName evidence="1">Photosystem I P700 chlorophyll a apoprotein A2</fullName>
        <ecNumber evidence="1">1.97.1.12</ecNumber>
    </recommendedName>
    <alternativeName>
        <fullName evidence="1">PsaB</fullName>
    </alternativeName>
</protein>
<dbReference type="EC" id="1.97.1.12" evidence="1"/>
<dbReference type="EMBL" id="AP008231">
    <property type="protein sequence ID" value="BAD80235.1"/>
    <property type="molecule type" value="Genomic_DNA"/>
</dbReference>
<dbReference type="RefSeq" id="WP_011244355.1">
    <property type="nucleotide sequence ID" value="NZ_CP085785.1"/>
</dbReference>
<dbReference type="SMR" id="Q5N0D5"/>
<dbReference type="GeneID" id="72430924"/>
<dbReference type="KEGG" id="syc:syc2045_d"/>
<dbReference type="eggNOG" id="COG2885">
    <property type="taxonomic scope" value="Bacteria"/>
</dbReference>
<dbReference type="Proteomes" id="UP000001175">
    <property type="component" value="Chromosome"/>
</dbReference>
<dbReference type="GO" id="GO:0009522">
    <property type="term" value="C:photosystem I"/>
    <property type="evidence" value="ECO:0007669"/>
    <property type="project" value="UniProtKB-KW"/>
</dbReference>
<dbReference type="GO" id="GO:0031676">
    <property type="term" value="C:plasma membrane-derived thylakoid membrane"/>
    <property type="evidence" value="ECO:0007669"/>
    <property type="project" value="UniProtKB-SubCell"/>
</dbReference>
<dbReference type="GO" id="GO:0051539">
    <property type="term" value="F:4 iron, 4 sulfur cluster binding"/>
    <property type="evidence" value="ECO:0007669"/>
    <property type="project" value="UniProtKB-KW"/>
</dbReference>
<dbReference type="GO" id="GO:0016168">
    <property type="term" value="F:chlorophyll binding"/>
    <property type="evidence" value="ECO:0007669"/>
    <property type="project" value="UniProtKB-KW"/>
</dbReference>
<dbReference type="GO" id="GO:0009055">
    <property type="term" value="F:electron transfer activity"/>
    <property type="evidence" value="ECO:0007669"/>
    <property type="project" value="UniProtKB-UniRule"/>
</dbReference>
<dbReference type="GO" id="GO:0000287">
    <property type="term" value="F:magnesium ion binding"/>
    <property type="evidence" value="ECO:0007669"/>
    <property type="project" value="UniProtKB-UniRule"/>
</dbReference>
<dbReference type="GO" id="GO:0016491">
    <property type="term" value="F:oxidoreductase activity"/>
    <property type="evidence" value="ECO:0007669"/>
    <property type="project" value="UniProtKB-KW"/>
</dbReference>
<dbReference type="GO" id="GO:0015979">
    <property type="term" value="P:photosynthesis"/>
    <property type="evidence" value="ECO:0007669"/>
    <property type="project" value="UniProtKB-UniRule"/>
</dbReference>
<dbReference type="FunFam" id="1.20.1130.10:FF:000001">
    <property type="entry name" value="Photosystem I P700 chlorophyll a apoprotein A2"/>
    <property type="match status" value="1"/>
</dbReference>
<dbReference type="Gene3D" id="1.20.1130.10">
    <property type="entry name" value="Photosystem I PsaA/PsaB"/>
    <property type="match status" value="1"/>
</dbReference>
<dbReference type="HAMAP" id="MF_00482">
    <property type="entry name" value="PSI_PsaB"/>
    <property type="match status" value="1"/>
</dbReference>
<dbReference type="InterPro" id="IPR001280">
    <property type="entry name" value="PSI_PsaA/B"/>
</dbReference>
<dbReference type="InterPro" id="IPR020586">
    <property type="entry name" value="PSI_PsaA/B_CS"/>
</dbReference>
<dbReference type="InterPro" id="IPR036408">
    <property type="entry name" value="PSI_PsaA/B_sf"/>
</dbReference>
<dbReference type="InterPro" id="IPR006244">
    <property type="entry name" value="PSI_PsaB"/>
</dbReference>
<dbReference type="NCBIfam" id="TIGR01336">
    <property type="entry name" value="psaB"/>
    <property type="match status" value="1"/>
</dbReference>
<dbReference type="PANTHER" id="PTHR30128">
    <property type="entry name" value="OUTER MEMBRANE PROTEIN, OMPA-RELATED"/>
    <property type="match status" value="1"/>
</dbReference>
<dbReference type="PANTHER" id="PTHR30128:SF19">
    <property type="entry name" value="PHOTOSYSTEM I P700 CHLOROPHYLL A APOPROTEIN A1-RELATED"/>
    <property type="match status" value="1"/>
</dbReference>
<dbReference type="Pfam" id="PF00223">
    <property type="entry name" value="PsaA_PsaB"/>
    <property type="match status" value="1"/>
</dbReference>
<dbReference type="PIRSF" id="PIRSF002905">
    <property type="entry name" value="PSI_A"/>
    <property type="match status" value="1"/>
</dbReference>
<dbReference type="PRINTS" id="PR00257">
    <property type="entry name" value="PHOTSYSPSAAB"/>
</dbReference>
<dbReference type="SUPFAM" id="SSF81558">
    <property type="entry name" value="Photosystem I subunits PsaA/PsaB"/>
    <property type="match status" value="1"/>
</dbReference>
<dbReference type="PROSITE" id="PS00419">
    <property type="entry name" value="PHOTOSYSTEM_I_PSAAB"/>
    <property type="match status" value="1"/>
</dbReference>
<sequence length="734" mass="81476">MATKFPKFSQDLAQDPTTRRIWYGIATAHDFESHDGMTEENLYQKIFASHFGHLAIIFLWVSGNLFHVAWQGNFEQWSQDPLHVRPIAHAIWDPHFGQGAIDAFTQAGASSPVNVAYSGVYHWWYTIGMRTNGDLYQGSIFLLILSALFLFAGWLHLQPKFRPSLSWFKNAESRLNHHLAGLFGFSSLAWTGHLVHVAIPEARGQHVGWDNFLSTLPHPAGLAPFFTGNWSVYAENPDTASHAFGTAEGAGTAILTFLGGFHPQTEALWLTDIAHHHLAIAVIFIIAGHMYRTNFGIGHSIKEILEAHKPPAGGLGAGHKGLYETLNNSLHFQLALALASLGVVTSLVAQHMYSMPPYAFIAKDYTTMAALYTHHQYIATFIMCGAFAHGAIFLIRDYDPEANKNNVLARVLEHKEAIISHLSWVSLFLGFHTLGLYVHNDVVVAFGTPEKQILIEPVFAQFVQAASGKALYGFNVLLANADSAATAASLGTYLPNWLDAINSGKTALFLPIGPGDFLVHHAIALGLHTTTLILVKGALDARGSKLMPDKKDFGYSFPCDGPGRGGTCDISAWDAFYLAVFWALNTVGWVTFYWHWKNLTVWQGNVAQFNESSTYLMGWLRDYLWLNSSQLINGYNPFGTNNLSVWSWMFLFGHLIWATGFMFLISWRGYWQELIETIVWAHQRTPLANIVGWKDKPVALSIVQARVVGLAHFTVGYFLTYAAFLIASTAGKFG</sequence>
<gene>
    <name evidence="1" type="primary">psaB</name>
    <name type="ordered locus">syc2045_d</name>
</gene>
<evidence type="ECO:0000255" key="1">
    <source>
        <dbReference type="HAMAP-Rule" id="MF_00482"/>
    </source>
</evidence>
<accession>Q5N0D5</accession>
<comment type="function">
    <text evidence="1">PsaA and PsaB bind P700, the primary electron donor of photosystem I (PSI), as well as the electron acceptors A0, A1 and FX. PSI is a plastocyanin/cytochrome c6-ferredoxin oxidoreductase, converting photonic excitation into a charge separation, which transfers an electron from the donor P700 chlorophyll pair to the spectroscopically characterized acceptors A0, A1, FX, FA and FB in turn. Oxidized P700 is reduced on the lumenal side of the thylakoid membrane by plastocyanin or cytochrome c6.</text>
</comment>
<comment type="catalytic activity">
    <reaction evidence="1">
        <text>reduced [plastocyanin] + hnu + oxidized [2Fe-2S]-[ferredoxin] = oxidized [plastocyanin] + reduced [2Fe-2S]-[ferredoxin]</text>
        <dbReference type="Rhea" id="RHEA:30407"/>
        <dbReference type="Rhea" id="RHEA-COMP:10000"/>
        <dbReference type="Rhea" id="RHEA-COMP:10001"/>
        <dbReference type="Rhea" id="RHEA-COMP:10039"/>
        <dbReference type="Rhea" id="RHEA-COMP:10040"/>
        <dbReference type="ChEBI" id="CHEBI:29036"/>
        <dbReference type="ChEBI" id="CHEBI:30212"/>
        <dbReference type="ChEBI" id="CHEBI:33737"/>
        <dbReference type="ChEBI" id="CHEBI:33738"/>
        <dbReference type="ChEBI" id="CHEBI:49552"/>
        <dbReference type="EC" id="1.97.1.12"/>
    </reaction>
</comment>
<comment type="cofactor">
    <text evidence="1">PSI electron transfer chain: 5 chlorophyll a, 1 chlorophyll a', 2 phylloquinones and 3 4Fe-4S clusters. PSI core antenna: 90 chlorophyll a, 22 carotenoids, 3 phospholipids and 1 galactolipid. P700 is a chlorophyll a/chlorophyll a' dimer, A0 is one or more chlorophyll a, A1 is one or both phylloquinones and FX is a shared 4Fe-4S iron-sulfur center.</text>
</comment>
<comment type="subunit">
    <text evidence="1">The PsaA/B heterodimer binds the P700 chlorophyll special pair and subsequent electron acceptors. PSI consists of a core antenna complex that captures photons, and an electron transfer chain that converts photonic excitation into a charge separation. The cyanobacterial PSI reaction center is composed of one copy each of PsaA,B,C,D,E,F,I,J,K,L,M and X, and forms trimeric complexes.</text>
</comment>
<comment type="subcellular location">
    <subcellularLocation>
        <location evidence="1">Cellular thylakoid membrane</location>
        <topology evidence="1">Multi-pass membrane protein</topology>
    </subcellularLocation>
</comment>
<comment type="similarity">
    <text evidence="1">Belongs to the PsaA/PsaB family.</text>
</comment>
<proteinExistence type="inferred from homology"/>
<feature type="chain" id="PRO_0000088652" description="Photosystem I P700 chlorophyll a apoprotein A2">
    <location>
        <begin position="1"/>
        <end position="734"/>
    </location>
</feature>
<feature type="transmembrane region" description="Helical; Name=I" evidence="1">
    <location>
        <begin position="46"/>
        <end position="69"/>
    </location>
</feature>
<feature type="transmembrane region" description="Helical; Name=II" evidence="1">
    <location>
        <begin position="135"/>
        <end position="158"/>
    </location>
</feature>
<feature type="transmembrane region" description="Helical; Name=III" evidence="1">
    <location>
        <begin position="175"/>
        <end position="199"/>
    </location>
</feature>
<feature type="transmembrane region" description="Helical; Name=IV" evidence="1">
    <location>
        <begin position="273"/>
        <end position="291"/>
    </location>
</feature>
<feature type="transmembrane region" description="Helical; Name=V" evidence="1">
    <location>
        <begin position="330"/>
        <end position="353"/>
    </location>
</feature>
<feature type="transmembrane region" description="Helical; Name=VI" evidence="1">
    <location>
        <begin position="369"/>
        <end position="395"/>
    </location>
</feature>
<feature type="transmembrane region" description="Helical; Name=VII" evidence="1">
    <location>
        <begin position="417"/>
        <end position="439"/>
    </location>
</feature>
<feature type="transmembrane region" description="Helical; Name=VIII" evidence="1">
    <location>
        <begin position="517"/>
        <end position="535"/>
    </location>
</feature>
<feature type="transmembrane region" description="Helical; Name=IX" evidence="1">
    <location>
        <begin position="575"/>
        <end position="596"/>
    </location>
</feature>
<feature type="transmembrane region" description="Helical; Name=X" evidence="1">
    <location>
        <begin position="643"/>
        <end position="665"/>
    </location>
</feature>
<feature type="transmembrane region" description="Helical; Name=XI" evidence="1">
    <location>
        <begin position="707"/>
        <end position="727"/>
    </location>
</feature>
<feature type="binding site" evidence="1">
    <location>
        <position position="559"/>
    </location>
    <ligand>
        <name>[4Fe-4S] cluster</name>
        <dbReference type="ChEBI" id="CHEBI:49883"/>
        <note>ligand shared between dimeric partners</note>
    </ligand>
</feature>
<feature type="binding site" evidence="1">
    <location>
        <position position="568"/>
    </location>
    <ligand>
        <name>[4Fe-4S] cluster</name>
        <dbReference type="ChEBI" id="CHEBI:49883"/>
        <note>ligand shared between dimeric partners</note>
    </ligand>
</feature>
<feature type="binding site" description="axial binding residue" evidence="1">
    <location>
        <position position="654"/>
    </location>
    <ligand>
        <name>chlorophyll a</name>
        <dbReference type="ChEBI" id="CHEBI:58416"/>
        <label>B1</label>
    </ligand>
    <ligandPart>
        <name>Mg</name>
        <dbReference type="ChEBI" id="CHEBI:25107"/>
    </ligandPart>
</feature>
<feature type="binding site" description="axial binding residue" evidence="1">
    <location>
        <position position="662"/>
    </location>
    <ligand>
        <name>chlorophyll a</name>
        <dbReference type="ChEBI" id="CHEBI:58416"/>
        <label>B3</label>
    </ligand>
    <ligandPart>
        <name>Mg</name>
        <dbReference type="ChEBI" id="CHEBI:25107"/>
    </ligandPart>
</feature>
<feature type="binding site" evidence="1">
    <location>
        <position position="670"/>
    </location>
    <ligand>
        <name>chlorophyll a</name>
        <dbReference type="ChEBI" id="CHEBI:58416"/>
        <label>B3</label>
    </ligand>
</feature>
<feature type="binding site" evidence="1">
    <location>
        <position position="671"/>
    </location>
    <ligand>
        <name>phylloquinone</name>
        <dbReference type="ChEBI" id="CHEBI:18067"/>
        <label>B</label>
    </ligand>
</feature>
<organism>
    <name type="scientific">Synechococcus sp. (strain ATCC 27144 / PCC 6301 / SAUG 1402/1)</name>
    <name type="common">Anacystis nidulans</name>
    <dbReference type="NCBI Taxonomy" id="269084"/>
    <lineage>
        <taxon>Bacteria</taxon>
        <taxon>Bacillati</taxon>
        <taxon>Cyanobacteriota</taxon>
        <taxon>Cyanophyceae</taxon>
        <taxon>Synechococcales</taxon>
        <taxon>Synechococcaceae</taxon>
        <taxon>Synechococcus</taxon>
    </lineage>
</organism>
<keyword id="KW-0004">4Fe-4S</keyword>
<keyword id="KW-0148">Chlorophyll</keyword>
<keyword id="KW-0157">Chromophore</keyword>
<keyword id="KW-0249">Electron transport</keyword>
<keyword id="KW-0408">Iron</keyword>
<keyword id="KW-0411">Iron-sulfur</keyword>
<keyword id="KW-0460">Magnesium</keyword>
<keyword id="KW-0472">Membrane</keyword>
<keyword id="KW-0479">Metal-binding</keyword>
<keyword id="KW-0560">Oxidoreductase</keyword>
<keyword id="KW-0602">Photosynthesis</keyword>
<keyword id="KW-0603">Photosystem I</keyword>
<keyword id="KW-0793">Thylakoid</keyword>
<keyword id="KW-0812">Transmembrane</keyword>
<keyword id="KW-1133">Transmembrane helix</keyword>
<keyword id="KW-0813">Transport</keyword>
<name>PSAB_SYNP6</name>
<reference key="1">
    <citation type="journal article" date="2007" name="Photosyn. Res.">
        <title>Complete nucleotide sequence of the freshwater unicellular cyanobacterium Synechococcus elongatus PCC 6301 chromosome: gene content and organization.</title>
        <authorList>
            <person name="Sugita C."/>
            <person name="Ogata K."/>
            <person name="Shikata M."/>
            <person name="Jikuya H."/>
            <person name="Takano J."/>
            <person name="Furumichi M."/>
            <person name="Kanehisa M."/>
            <person name="Omata T."/>
            <person name="Sugiura M."/>
            <person name="Sugita M."/>
        </authorList>
    </citation>
    <scope>NUCLEOTIDE SEQUENCE [LARGE SCALE GENOMIC DNA]</scope>
    <source>
        <strain>ATCC 27144 / PCC 6301 / SAUG 1402/1</strain>
    </source>
</reference>